<evidence type="ECO:0000255" key="1">
    <source>
        <dbReference type="HAMAP-Rule" id="MF_00340"/>
    </source>
</evidence>
<evidence type="ECO:0000256" key="2">
    <source>
        <dbReference type="SAM" id="MobiDB-lite"/>
    </source>
</evidence>
<evidence type="ECO:0000305" key="3"/>
<comment type="similarity">
    <text evidence="1">Belongs to the bacterial ribosomal protein bL32 family.</text>
</comment>
<keyword id="KW-0687">Ribonucleoprotein</keyword>
<keyword id="KW-0689">Ribosomal protein</keyword>
<proteinExistence type="inferred from homology"/>
<reference key="1">
    <citation type="journal article" date="2007" name="Genome Biol.">
        <title>Characterization and modeling of the Haemophilus influenzae core and supragenomes based on the complete genomic sequences of Rd and 12 clinical nontypeable strains.</title>
        <authorList>
            <person name="Hogg J.S."/>
            <person name="Hu F.Z."/>
            <person name="Janto B."/>
            <person name="Boissy R."/>
            <person name="Hayes J."/>
            <person name="Keefe R."/>
            <person name="Post J.C."/>
            <person name="Ehrlich G.D."/>
        </authorList>
    </citation>
    <scope>NUCLEOTIDE SEQUENCE [LARGE SCALE GENOMIC DNA]</scope>
    <source>
        <strain>PittGG</strain>
    </source>
</reference>
<organism>
    <name type="scientific">Haemophilus influenzae (strain PittGG)</name>
    <dbReference type="NCBI Taxonomy" id="374931"/>
    <lineage>
        <taxon>Bacteria</taxon>
        <taxon>Pseudomonadati</taxon>
        <taxon>Pseudomonadota</taxon>
        <taxon>Gammaproteobacteria</taxon>
        <taxon>Pasteurellales</taxon>
        <taxon>Pasteurellaceae</taxon>
        <taxon>Haemophilus</taxon>
    </lineage>
</organism>
<protein>
    <recommendedName>
        <fullName evidence="1">Large ribosomal subunit protein bL32</fullName>
    </recommendedName>
    <alternativeName>
        <fullName evidence="3">50S ribosomal protein L32</fullName>
    </alternativeName>
</protein>
<name>RL32_HAEIG</name>
<sequence>MAVQQNKKSRSRRDMRRSHDALTTAAVSVDKASGETHLRHHVTADGYYRGRKVINK</sequence>
<accession>A5UFW3</accession>
<dbReference type="EMBL" id="CP000672">
    <property type="protein sequence ID" value="ABQ99668.1"/>
    <property type="molecule type" value="Genomic_DNA"/>
</dbReference>
<dbReference type="SMR" id="A5UFW3"/>
<dbReference type="KEGG" id="hiq:CGSHiGG_03390"/>
<dbReference type="HOGENOM" id="CLU_129084_2_1_6"/>
<dbReference type="Proteomes" id="UP000001990">
    <property type="component" value="Chromosome"/>
</dbReference>
<dbReference type="GO" id="GO:0015934">
    <property type="term" value="C:large ribosomal subunit"/>
    <property type="evidence" value="ECO:0007669"/>
    <property type="project" value="InterPro"/>
</dbReference>
<dbReference type="GO" id="GO:0003735">
    <property type="term" value="F:structural constituent of ribosome"/>
    <property type="evidence" value="ECO:0007669"/>
    <property type="project" value="InterPro"/>
</dbReference>
<dbReference type="GO" id="GO:0006412">
    <property type="term" value="P:translation"/>
    <property type="evidence" value="ECO:0007669"/>
    <property type="project" value="UniProtKB-UniRule"/>
</dbReference>
<dbReference type="Gene3D" id="1.20.5.640">
    <property type="entry name" value="Single helix bin"/>
    <property type="match status" value="1"/>
</dbReference>
<dbReference type="HAMAP" id="MF_00340">
    <property type="entry name" value="Ribosomal_bL32"/>
    <property type="match status" value="1"/>
</dbReference>
<dbReference type="InterPro" id="IPR002677">
    <property type="entry name" value="Ribosomal_bL32"/>
</dbReference>
<dbReference type="InterPro" id="IPR044957">
    <property type="entry name" value="Ribosomal_bL32_bact"/>
</dbReference>
<dbReference type="InterPro" id="IPR011332">
    <property type="entry name" value="Ribosomal_zn-bd"/>
</dbReference>
<dbReference type="NCBIfam" id="TIGR01031">
    <property type="entry name" value="rpmF_bact"/>
    <property type="match status" value="1"/>
</dbReference>
<dbReference type="PANTHER" id="PTHR35534">
    <property type="entry name" value="50S RIBOSOMAL PROTEIN L32"/>
    <property type="match status" value="1"/>
</dbReference>
<dbReference type="PANTHER" id="PTHR35534:SF1">
    <property type="entry name" value="LARGE RIBOSOMAL SUBUNIT PROTEIN BL32"/>
    <property type="match status" value="1"/>
</dbReference>
<dbReference type="Pfam" id="PF01783">
    <property type="entry name" value="Ribosomal_L32p"/>
    <property type="match status" value="1"/>
</dbReference>
<dbReference type="SUPFAM" id="SSF57829">
    <property type="entry name" value="Zn-binding ribosomal proteins"/>
    <property type="match status" value="1"/>
</dbReference>
<feature type="chain" id="PRO_1000005061" description="Large ribosomal subunit protein bL32">
    <location>
        <begin position="1"/>
        <end position="56"/>
    </location>
</feature>
<feature type="region of interest" description="Disordered" evidence="2">
    <location>
        <begin position="1"/>
        <end position="37"/>
    </location>
</feature>
<feature type="compositionally biased region" description="Basic residues" evidence="2">
    <location>
        <begin position="7"/>
        <end position="16"/>
    </location>
</feature>
<gene>
    <name evidence="1" type="primary">rpmF</name>
    <name type="ordered locus">CGSHiGG_03390</name>
</gene>